<organism>
    <name type="scientific">Saccharolobus islandicus (strain M.16.27)</name>
    <name type="common">Sulfolobus islandicus</name>
    <dbReference type="NCBI Taxonomy" id="427318"/>
    <lineage>
        <taxon>Archaea</taxon>
        <taxon>Thermoproteota</taxon>
        <taxon>Thermoprotei</taxon>
        <taxon>Sulfolobales</taxon>
        <taxon>Sulfolobaceae</taxon>
        <taxon>Saccharolobus</taxon>
    </lineage>
</organism>
<name>RPO12_SACI3</name>
<accession>C3N6M6</accession>
<evidence type="ECO:0000255" key="1">
    <source>
        <dbReference type="HAMAP-Rule" id="MF_00615"/>
    </source>
</evidence>
<reference key="1">
    <citation type="journal article" date="2009" name="Proc. Natl. Acad. Sci. U.S.A.">
        <title>Biogeography of the Sulfolobus islandicus pan-genome.</title>
        <authorList>
            <person name="Reno M.L."/>
            <person name="Held N.L."/>
            <person name="Fields C.J."/>
            <person name="Burke P.V."/>
            <person name="Whitaker R.J."/>
        </authorList>
    </citation>
    <scope>NUCLEOTIDE SEQUENCE [LARGE SCALE GENOMIC DNA]</scope>
    <source>
        <strain>M.16.27</strain>
    </source>
</reference>
<sequence>MAVYRCGKCWKTFTDEQLKVLPGVRCPYCGYKIIFMVRKPTIKIVKAI</sequence>
<gene>
    <name evidence="1" type="primary">rpo12</name>
    <name evidence="1" type="synonym">rpoP</name>
    <name type="ordered locus">M1627_1776</name>
</gene>
<protein>
    <recommendedName>
        <fullName evidence="1">DNA-directed RNA polymerase subunit Rpo12</fullName>
        <ecNumber evidence="1">2.7.7.6</ecNumber>
    </recommendedName>
    <alternativeName>
        <fullName evidence="1">DNA-directed RNA polymerase subunit P</fullName>
    </alternativeName>
</protein>
<keyword id="KW-0963">Cytoplasm</keyword>
<keyword id="KW-0240">DNA-directed RNA polymerase</keyword>
<keyword id="KW-0479">Metal-binding</keyword>
<keyword id="KW-0548">Nucleotidyltransferase</keyword>
<keyword id="KW-0804">Transcription</keyword>
<keyword id="KW-0808">Transferase</keyword>
<keyword id="KW-0862">Zinc</keyword>
<feature type="chain" id="PRO_1000212273" description="DNA-directed RNA polymerase subunit Rpo12">
    <location>
        <begin position="1"/>
        <end position="48"/>
    </location>
</feature>
<feature type="binding site" evidence="1">
    <location>
        <position position="9"/>
    </location>
    <ligand>
        <name>Zn(2+)</name>
        <dbReference type="ChEBI" id="CHEBI:29105"/>
    </ligand>
</feature>
<feature type="binding site" evidence="1">
    <location>
        <position position="26"/>
    </location>
    <ligand>
        <name>Zn(2+)</name>
        <dbReference type="ChEBI" id="CHEBI:29105"/>
    </ligand>
</feature>
<feature type="binding site" evidence="1">
    <location>
        <position position="29"/>
    </location>
    <ligand>
        <name>Zn(2+)</name>
        <dbReference type="ChEBI" id="CHEBI:29105"/>
    </ligand>
</feature>
<comment type="function">
    <text evidence="1">DNA-dependent RNA polymerase (RNAP) catalyzes the transcription of DNA into RNA using the four ribonucleoside triphosphates as substrates.</text>
</comment>
<comment type="catalytic activity">
    <reaction evidence="1">
        <text>RNA(n) + a ribonucleoside 5'-triphosphate = RNA(n+1) + diphosphate</text>
        <dbReference type="Rhea" id="RHEA:21248"/>
        <dbReference type="Rhea" id="RHEA-COMP:14527"/>
        <dbReference type="Rhea" id="RHEA-COMP:17342"/>
        <dbReference type="ChEBI" id="CHEBI:33019"/>
        <dbReference type="ChEBI" id="CHEBI:61557"/>
        <dbReference type="ChEBI" id="CHEBI:140395"/>
        <dbReference type="EC" id="2.7.7.6"/>
    </reaction>
</comment>
<comment type="cofactor">
    <cofactor evidence="1">
        <name>Zn(2+)</name>
        <dbReference type="ChEBI" id="CHEBI:29105"/>
    </cofactor>
    <text evidence="1">Binds 1 zinc ion.</text>
</comment>
<comment type="subunit">
    <text evidence="1">Part of the RNA polymerase complex.</text>
</comment>
<comment type="subcellular location">
    <subcellularLocation>
        <location evidence="1">Cytoplasm</location>
    </subcellularLocation>
</comment>
<comment type="similarity">
    <text evidence="1">Belongs to the archaeal Rpo12/eukaryotic RPC10 RNA polymerase subunit family.</text>
</comment>
<dbReference type="EC" id="2.7.7.6" evidence="1"/>
<dbReference type="EMBL" id="CP001401">
    <property type="protein sequence ID" value="ACP55651.1"/>
    <property type="molecule type" value="Genomic_DNA"/>
</dbReference>
<dbReference type="RefSeq" id="WP_009988725.1">
    <property type="nucleotide sequence ID" value="NC_012632.1"/>
</dbReference>
<dbReference type="SMR" id="C3N6M6"/>
<dbReference type="KEGG" id="sim:M1627_1776"/>
<dbReference type="HOGENOM" id="CLU_179456_2_0_2"/>
<dbReference type="Proteomes" id="UP000002307">
    <property type="component" value="Chromosome"/>
</dbReference>
<dbReference type="GO" id="GO:0005737">
    <property type="term" value="C:cytoplasm"/>
    <property type="evidence" value="ECO:0007669"/>
    <property type="project" value="UniProtKB-SubCell"/>
</dbReference>
<dbReference type="GO" id="GO:0000428">
    <property type="term" value="C:DNA-directed RNA polymerase complex"/>
    <property type="evidence" value="ECO:0007669"/>
    <property type="project" value="UniProtKB-KW"/>
</dbReference>
<dbReference type="GO" id="GO:0003677">
    <property type="term" value="F:DNA binding"/>
    <property type="evidence" value="ECO:0007669"/>
    <property type="project" value="InterPro"/>
</dbReference>
<dbReference type="GO" id="GO:0003899">
    <property type="term" value="F:DNA-directed RNA polymerase activity"/>
    <property type="evidence" value="ECO:0007669"/>
    <property type="project" value="UniProtKB-UniRule"/>
</dbReference>
<dbReference type="GO" id="GO:0008270">
    <property type="term" value="F:zinc ion binding"/>
    <property type="evidence" value="ECO:0007669"/>
    <property type="project" value="UniProtKB-UniRule"/>
</dbReference>
<dbReference type="GO" id="GO:0006351">
    <property type="term" value="P:DNA-templated transcription"/>
    <property type="evidence" value="ECO:0007669"/>
    <property type="project" value="UniProtKB-UniRule"/>
</dbReference>
<dbReference type="Gene3D" id="2.20.28.30">
    <property type="entry name" value="RNA polymerase ii, chain L"/>
    <property type="match status" value="1"/>
</dbReference>
<dbReference type="HAMAP" id="MF_00615">
    <property type="entry name" value="RNApol_arch_Rpo12"/>
    <property type="match status" value="1"/>
</dbReference>
<dbReference type="InterPro" id="IPR006591">
    <property type="entry name" value="RNAP_P/RPABC4"/>
</dbReference>
<dbReference type="InterPro" id="IPR029040">
    <property type="entry name" value="RPABC4/Spt4"/>
</dbReference>
<dbReference type="InterPro" id="IPR023464">
    <property type="entry name" value="Rpo12"/>
</dbReference>
<dbReference type="NCBIfam" id="NF001604">
    <property type="entry name" value="PRK00398.1-1"/>
    <property type="match status" value="1"/>
</dbReference>
<dbReference type="SMART" id="SM00659">
    <property type="entry name" value="RPOLCX"/>
    <property type="match status" value="1"/>
</dbReference>
<dbReference type="SUPFAM" id="SSF63393">
    <property type="entry name" value="RNA polymerase subunits"/>
    <property type="match status" value="1"/>
</dbReference>
<proteinExistence type="inferred from homology"/>